<name>RL2_SYNSC</name>
<comment type="function">
    <text evidence="1">One of the primary rRNA binding proteins. Required for association of the 30S and 50S subunits to form the 70S ribosome, for tRNA binding and peptide bond formation. It has been suggested to have peptidyltransferase activity; this is somewhat controversial. Makes several contacts with the 16S rRNA in the 70S ribosome.</text>
</comment>
<comment type="subunit">
    <text evidence="1">Part of the 50S ribosomal subunit. Forms a bridge to the 30S subunit in the 70S ribosome.</text>
</comment>
<comment type="similarity">
    <text evidence="1">Belongs to the universal ribosomal protein uL2 family.</text>
</comment>
<keyword id="KW-0687">Ribonucleoprotein</keyword>
<keyword id="KW-0689">Ribosomal protein</keyword>
<keyword id="KW-0694">RNA-binding</keyword>
<keyword id="KW-0699">rRNA-binding</keyword>
<evidence type="ECO:0000255" key="1">
    <source>
        <dbReference type="HAMAP-Rule" id="MF_01320"/>
    </source>
</evidence>
<evidence type="ECO:0000256" key="2">
    <source>
        <dbReference type="SAM" id="MobiDB-lite"/>
    </source>
</evidence>
<evidence type="ECO:0000305" key="3"/>
<proteinExistence type="inferred from homology"/>
<reference key="1">
    <citation type="submission" date="2005-07" db="EMBL/GenBank/DDBJ databases">
        <title>Complete sequence of Synechococcus sp. CC9605.</title>
        <authorList>
            <consortium name="US DOE Joint Genome Institute"/>
            <person name="Copeland A."/>
            <person name="Lucas S."/>
            <person name="Lapidus A."/>
            <person name="Barry K."/>
            <person name="Detter J.C."/>
            <person name="Glavina T."/>
            <person name="Hammon N."/>
            <person name="Israni S."/>
            <person name="Pitluck S."/>
            <person name="Schmutz J."/>
            <person name="Martinez M."/>
            <person name="Larimer F."/>
            <person name="Land M."/>
            <person name="Kyrpides N."/>
            <person name="Ivanova N."/>
            <person name="Richardson P."/>
        </authorList>
    </citation>
    <scope>NUCLEOTIDE SEQUENCE [LARGE SCALE GENOMIC DNA]</scope>
    <source>
        <strain>CC9605</strain>
    </source>
</reference>
<feature type="chain" id="PRO_0000237252" description="Large ribosomal subunit protein uL2">
    <location>
        <begin position="1"/>
        <end position="287"/>
    </location>
</feature>
<feature type="region of interest" description="Disordered" evidence="2">
    <location>
        <begin position="221"/>
        <end position="287"/>
    </location>
</feature>
<feature type="compositionally biased region" description="Basic residues" evidence="2">
    <location>
        <begin position="271"/>
        <end position="287"/>
    </location>
</feature>
<dbReference type="EMBL" id="CP000110">
    <property type="protein sequence ID" value="ABB34149.1"/>
    <property type="molecule type" value="Genomic_DNA"/>
</dbReference>
<dbReference type="RefSeq" id="WP_006851794.1">
    <property type="nucleotide sequence ID" value="NC_007516.1"/>
</dbReference>
<dbReference type="SMR" id="Q3AMN3"/>
<dbReference type="STRING" id="110662.Syncc9605_0373"/>
<dbReference type="KEGG" id="syd:Syncc9605_0373"/>
<dbReference type="eggNOG" id="COG0090">
    <property type="taxonomic scope" value="Bacteria"/>
</dbReference>
<dbReference type="HOGENOM" id="CLU_036235_2_1_3"/>
<dbReference type="OrthoDB" id="9778722at2"/>
<dbReference type="GO" id="GO:0015934">
    <property type="term" value="C:large ribosomal subunit"/>
    <property type="evidence" value="ECO:0007669"/>
    <property type="project" value="InterPro"/>
</dbReference>
<dbReference type="GO" id="GO:0019843">
    <property type="term" value="F:rRNA binding"/>
    <property type="evidence" value="ECO:0007669"/>
    <property type="project" value="UniProtKB-UniRule"/>
</dbReference>
<dbReference type="GO" id="GO:0003735">
    <property type="term" value="F:structural constituent of ribosome"/>
    <property type="evidence" value="ECO:0007669"/>
    <property type="project" value="InterPro"/>
</dbReference>
<dbReference type="GO" id="GO:0016740">
    <property type="term" value="F:transferase activity"/>
    <property type="evidence" value="ECO:0007669"/>
    <property type="project" value="InterPro"/>
</dbReference>
<dbReference type="GO" id="GO:0006412">
    <property type="term" value="P:translation"/>
    <property type="evidence" value="ECO:0007669"/>
    <property type="project" value="UniProtKB-UniRule"/>
</dbReference>
<dbReference type="FunFam" id="2.30.30.30:FF:000001">
    <property type="entry name" value="50S ribosomal protein L2"/>
    <property type="match status" value="1"/>
</dbReference>
<dbReference type="FunFam" id="2.40.50.140:FF:000003">
    <property type="entry name" value="50S ribosomal protein L2"/>
    <property type="match status" value="1"/>
</dbReference>
<dbReference type="FunFam" id="4.10.950.10:FF:000001">
    <property type="entry name" value="50S ribosomal protein L2"/>
    <property type="match status" value="1"/>
</dbReference>
<dbReference type="Gene3D" id="2.30.30.30">
    <property type="match status" value="1"/>
</dbReference>
<dbReference type="Gene3D" id="2.40.50.140">
    <property type="entry name" value="Nucleic acid-binding proteins"/>
    <property type="match status" value="1"/>
</dbReference>
<dbReference type="Gene3D" id="4.10.950.10">
    <property type="entry name" value="Ribosomal protein L2, domain 3"/>
    <property type="match status" value="1"/>
</dbReference>
<dbReference type="HAMAP" id="MF_01320_B">
    <property type="entry name" value="Ribosomal_uL2_B"/>
    <property type="match status" value="1"/>
</dbReference>
<dbReference type="InterPro" id="IPR012340">
    <property type="entry name" value="NA-bd_OB-fold"/>
</dbReference>
<dbReference type="InterPro" id="IPR014722">
    <property type="entry name" value="Rib_uL2_dom2"/>
</dbReference>
<dbReference type="InterPro" id="IPR002171">
    <property type="entry name" value="Ribosomal_uL2"/>
</dbReference>
<dbReference type="InterPro" id="IPR005880">
    <property type="entry name" value="Ribosomal_uL2_bac/org-type"/>
</dbReference>
<dbReference type="InterPro" id="IPR022669">
    <property type="entry name" value="Ribosomal_uL2_C"/>
</dbReference>
<dbReference type="InterPro" id="IPR022671">
    <property type="entry name" value="Ribosomal_uL2_CS"/>
</dbReference>
<dbReference type="InterPro" id="IPR014726">
    <property type="entry name" value="Ribosomal_uL2_dom3"/>
</dbReference>
<dbReference type="InterPro" id="IPR022666">
    <property type="entry name" value="Ribosomal_uL2_RNA-bd_dom"/>
</dbReference>
<dbReference type="InterPro" id="IPR008991">
    <property type="entry name" value="Translation_prot_SH3-like_sf"/>
</dbReference>
<dbReference type="NCBIfam" id="TIGR01171">
    <property type="entry name" value="rplB_bact"/>
    <property type="match status" value="1"/>
</dbReference>
<dbReference type="PANTHER" id="PTHR13691:SF5">
    <property type="entry name" value="LARGE RIBOSOMAL SUBUNIT PROTEIN UL2M"/>
    <property type="match status" value="1"/>
</dbReference>
<dbReference type="PANTHER" id="PTHR13691">
    <property type="entry name" value="RIBOSOMAL PROTEIN L2"/>
    <property type="match status" value="1"/>
</dbReference>
<dbReference type="Pfam" id="PF00181">
    <property type="entry name" value="Ribosomal_L2"/>
    <property type="match status" value="1"/>
</dbReference>
<dbReference type="Pfam" id="PF03947">
    <property type="entry name" value="Ribosomal_L2_C"/>
    <property type="match status" value="1"/>
</dbReference>
<dbReference type="PIRSF" id="PIRSF002158">
    <property type="entry name" value="Ribosomal_L2"/>
    <property type="match status" value="1"/>
</dbReference>
<dbReference type="SMART" id="SM01383">
    <property type="entry name" value="Ribosomal_L2"/>
    <property type="match status" value="1"/>
</dbReference>
<dbReference type="SMART" id="SM01382">
    <property type="entry name" value="Ribosomal_L2_C"/>
    <property type="match status" value="1"/>
</dbReference>
<dbReference type="SUPFAM" id="SSF50249">
    <property type="entry name" value="Nucleic acid-binding proteins"/>
    <property type="match status" value="1"/>
</dbReference>
<dbReference type="SUPFAM" id="SSF50104">
    <property type="entry name" value="Translation proteins SH3-like domain"/>
    <property type="match status" value="1"/>
</dbReference>
<dbReference type="PROSITE" id="PS00467">
    <property type="entry name" value="RIBOSOMAL_L2"/>
    <property type="match status" value="1"/>
</dbReference>
<protein>
    <recommendedName>
        <fullName evidence="1">Large ribosomal subunit protein uL2</fullName>
    </recommendedName>
    <alternativeName>
        <fullName evidence="3">50S ribosomal protein L2</fullName>
    </alternativeName>
</protein>
<sequence>MAIRNFRPYTPGTRTRVVTDFSEITSRKPERTLVVAKHRRKGRNNRGVITCRHRGGGHKRLYRVVDFRRNKHGVPAKVAAIHYDPHRNARLALLFYADGEKRYILAPAGVQVGQTVVSGPDAPIENGNAMPLSSVPLGSAVHCVELYAGRGGQMVRTAGASAQVMAKEGDYVALKLPSTEVRLVRRECYATLGEVGNSEMRNTSLGKAGRRRWLGRRPQVRGSVMNPCDHPHGGGEGRAPIGRSGPVTPWGKPALGLKTRKRNKPSNQYVLRKRRKTSKRSRGGRDS</sequence>
<organism>
    <name type="scientific">Synechococcus sp. (strain CC9605)</name>
    <dbReference type="NCBI Taxonomy" id="110662"/>
    <lineage>
        <taxon>Bacteria</taxon>
        <taxon>Bacillati</taxon>
        <taxon>Cyanobacteriota</taxon>
        <taxon>Cyanophyceae</taxon>
        <taxon>Synechococcales</taxon>
        <taxon>Synechococcaceae</taxon>
        <taxon>Synechococcus</taxon>
    </lineage>
</organism>
<gene>
    <name evidence="1" type="primary">rplB</name>
    <name evidence="1" type="synonym">rpl2</name>
    <name type="ordered locus">Syncc9605_0373</name>
</gene>
<accession>Q3AMN3</accession>